<organism>
    <name type="scientific">Synechococcus sp. (strain CC9311)</name>
    <dbReference type="NCBI Taxonomy" id="64471"/>
    <lineage>
        <taxon>Bacteria</taxon>
        <taxon>Bacillati</taxon>
        <taxon>Cyanobacteriota</taxon>
        <taxon>Cyanophyceae</taxon>
        <taxon>Synechococcales</taxon>
        <taxon>Synechococcaceae</taxon>
        <taxon>Synechococcus</taxon>
    </lineage>
</organism>
<feature type="chain" id="PRO_0000267445" description="Nucleoside triphosphate pyrophosphatase">
    <location>
        <begin position="1"/>
        <end position="200"/>
    </location>
</feature>
<feature type="active site" description="Proton acceptor" evidence="1">
    <location>
        <position position="75"/>
    </location>
</feature>
<dbReference type="EC" id="3.6.1.9" evidence="1"/>
<dbReference type="EMBL" id="CP000435">
    <property type="protein sequence ID" value="ABI47828.1"/>
    <property type="molecule type" value="Genomic_DNA"/>
</dbReference>
<dbReference type="RefSeq" id="WP_011618834.1">
    <property type="nucleotide sequence ID" value="NC_008319.1"/>
</dbReference>
<dbReference type="SMR" id="Q0IBR4"/>
<dbReference type="STRING" id="64471.sync_0895"/>
<dbReference type="KEGG" id="syg:sync_0895"/>
<dbReference type="eggNOG" id="COG0424">
    <property type="taxonomic scope" value="Bacteria"/>
</dbReference>
<dbReference type="HOGENOM" id="CLU_040416_1_2_3"/>
<dbReference type="OrthoDB" id="9807767at2"/>
<dbReference type="Proteomes" id="UP000001961">
    <property type="component" value="Chromosome"/>
</dbReference>
<dbReference type="GO" id="GO:0005737">
    <property type="term" value="C:cytoplasm"/>
    <property type="evidence" value="ECO:0007669"/>
    <property type="project" value="UniProtKB-SubCell"/>
</dbReference>
<dbReference type="GO" id="GO:0047429">
    <property type="term" value="F:nucleoside triphosphate diphosphatase activity"/>
    <property type="evidence" value="ECO:0007669"/>
    <property type="project" value="UniProtKB-EC"/>
</dbReference>
<dbReference type="GO" id="GO:0009117">
    <property type="term" value="P:nucleotide metabolic process"/>
    <property type="evidence" value="ECO:0007669"/>
    <property type="project" value="UniProtKB-KW"/>
</dbReference>
<dbReference type="CDD" id="cd00555">
    <property type="entry name" value="Maf"/>
    <property type="match status" value="1"/>
</dbReference>
<dbReference type="Gene3D" id="3.90.950.10">
    <property type="match status" value="1"/>
</dbReference>
<dbReference type="HAMAP" id="MF_00528">
    <property type="entry name" value="Maf"/>
    <property type="match status" value="1"/>
</dbReference>
<dbReference type="InterPro" id="IPR001633">
    <property type="entry name" value="EAL_dom"/>
</dbReference>
<dbReference type="InterPro" id="IPR029001">
    <property type="entry name" value="ITPase-like_fam"/>
</dbReference>
<dbReference type="InterPro" id="IPR003697">
    <property type="entry name" value="Maf-like"/>
</dbReference>
<dbReference type="NCBIfam" id="TIGR00172">
    <property type="entry name" value="maf"/>
    <property type="match status" value="1"/>
</dbReference>
<dbReference type="PANTHER" id="PTHR43213">
    <property type="entry name" value="BIFUNCTIONAL DTTP/UTP PYROPHOSPHATASE/METHYLTRANSFERASE PROTEIN-RELATED"/>
    <property type="match status" value="1"/>
</dbReference>
<dbReference type="PANTHER" id="PTHR43213:SF5">
    <property type="entry name" value="BIFUNCTIONAL DTTP_UTP PYROPHOSPHATASE_METHYLTRANSFERASE PROTEIN-RELATED"/>
    <property type="match status" value="1"/>
</dbReference>
<dbReference type="Pfam" id="PF02545">
    <property type="entry name" value="Maf"/>
    <property type="match status" value="1"/>
</dbReference>
<dbReference type="PIRSF" id="PIRSF006305">
    <property type="entry name" value="Maf"/>
    <property type="match status" value="1"/>
</dbReference>
<dbReference type="SUPFAM" id="SSF52972">
    <property type="entry name" value="ITPase-like"/>
    <property type="match status" value="1"/>
</dbReference>
<protein>
    <recommendedName>
        <fullName evidence="1">Nucleoside triphosphate pyrophosphatase</fullName>
        <ecNumber evidence="1">3.6.1.9</ecNumber>
    </recommendedName>
    <alternativeName>
        <fullName evidence="1">Nucleotide pyrophosphatase</fullName>
        <shortName evidence="1">Nucleotide PPase</shortName>
    </alternativeName>
</protein>
<gene>
    <name type="ordered locus">sync_0895</name>
</gene>
<comment type="function">
    <text evidence="1">Nucleoside triphosphate pyrophosphatase. May have a dual role in cell division arrest and in preventing the incorporation of modified nucleotides into cellular nucleic acids.</text>
</comment>
<comment type="catalytic activity">
    <reaction evidence="1">
        <text>a ribonucleoside 5'-triphosphate + H2O = a ribonucleoside 5'-phosphate + diphosphate + H(+)</text>
        <dbReference type="Rhea" id="RHEA:23996"/>
        <dbReference type="ChEBI" id="CHEBI:15377"/>
        <dbReference type="ChEBI" id="CHEBI:15378"/>
        <dbReference type="ChEBI" id="CHEBI:33019"/>
        <dbReference type="ChEBI" id="CHEBI:58043"/>
        <dbReference type="ChEBI" id="CHEBI:61557"/>
        <dbReference type="EC" id="3.6.1.9"/>
    </reaction>
</comment>
<comment type="catalytic activity">
    <reaction evidence="1">
        <text>a 2'-deoxyribonucleoside 5'-triphosphate + H2O = a 2'-deoxyribonucleoside 5'-phosphate + diphosphate + H(+)</text>
        <dbReference type="Rhea" id="RHEA:44644"/>
        <dbReference type="ChEBI" id="CHEBI:15377"/>
        <dbReference type="ChEBI" id="CHEBI:15378"/>
        <dbReference type="ChEBI" id="CHEBI:33019"/>
        <dbReference type="ChEBI" id="CHEBI:61560"/>
        <dbReference type="ChEBI" id="CHEBI:65317"/>
        <dbReference type="EC" id="3.6.1.9"/>
    </reaction>
</comment>
<comment type="cofactor">
    <cofactor evidence="1">
        <name>a divalent metal cation</name>
        <dbReference type="ChEBI" id="CHEBI:60240"/>
    </cofactor>
</comment>
<comment type="subcellular location">
    <subcellularLocation>
        <location evidence="1">Cytoplasm</location>
    </subcellularLocation>
</comment>
<comment type="similarity">
    <text evidence="1">Belongs to the Maf family.</text>
</comment>
<name>NTPP_SYNS3</name>
<accession>Q0IBR4</accession>
<sequence length="200" mass="21533">MLLLASASPARRRLLEQAQIPHQVMVSGVDEDQIHHPDPAQLVQLLAEAKASAVKLKVEQSAELNVSIKAVLGCDSVLAFEGEVFGKPVDAAEAVARWQRMRGKWAELHTGHCLIPPSFAPTTEGRAPEMQCTCVTTRVLFANLTDVEVEDYVASGEPLQCAGGFALEGRGGCCVEQLAGCYSNVIGLSLPLLRRWLSLS</sequence>
<evidence type="ECO:0000255" key="1">
    <source>
        <dbReference type="HAMAP-Rule" id="MF_00528"/>
    </source>
</evidence>
<keyword id="KW-0963">Cytoplasm</keyword>
<keyword id="KW-0378">Hydrolase</keyword>
<keyword id="KW-0546">Nucleotide metabolism</keyword>
<keyword id="KW-1185">Reference proteome</keyword>
<reference key="1">
    <citation type="journal article" date="2006" name="Proc. Natl. Acad. Sci. U.S.A.">
        <title>Genome sequence of Synechococcus CC9311: insights into adaptation to a coastal environment.</title>
        <authorList>
            <person name="Palenik B."/>
            <person name="Ren Q."/>
            <person name="Dupont C.L."/>
            <person name="Myers G.S."/>
            <person name="Heidelberg J.F."/>
            <person name="Badger J.H."/>
            <person name="Madupu R."/>
            <person name="Nelson W.C."/>
            <person name="Brinkac L.M."/>
            <person name="Dodson R.J."/>
            <person name="Durkin A.S."/>
            <person name="Daugherty S.C."/>
            <person name="Sullivan S.A."/>
            <person name="Khouri H."/>
            <person name="Mohamoud Y."/>
            <person name="Halpin R."/>
            <person name="Paulsen I.T."/>
        </authorList>
    </citation>
    <scope>NUCLEOTIDE SEQUENCE [LARGE SCALE GENOMIC DNA]</scope>
    <source>
        <strain>CC9311</strain>
    </source>
</reference>
<proteinExistence type="inferred from homology"/>